<comment type="similarity">
    <text evidence="1">Belongs to the bacterial ribosomal protein bL35 family.</text>
</comment>
<accession>A4J4Y9</accession>
<feature type="chain" id="PRO_1000072477" description="Large ribosomal subunit protein bL35">
    <location>
        <begin position="1"/>
        <end position="64"/>
    </location>
</feature>
<keyword id="KW-1185">Reference proteome</keyword>
<keyword id="KW-0687">Ribonucleoprotein</keyword>
<keyword id="KW-0689">Ribosomal protein</keyword>
<sequence length="64" mass="7430">MPKIKTHRGAAKRFKKTATGKIRGWHAFHSHILGKKTAKRKRNLRKSTIIHESDAVRISRLLPY</sequence>
<evidence type="ECO:0000255" key="1">
    <source>
        <dbReference type="HAMAP-Rule" id="MF_00514"/>
    </source>
</evidence>
<evidence type="ECO:0000305" key="2"/>
<reference key="1">
    <citation type="submission" date="2007-03" db="EMBL/GenBank/DDBJ databases">
        <title>Complete sequence of Desulfotomaculum reducens MI-1.</title>
        <authorList>
            <consortium name="US DOE Joint Genome Institute"/>
            <person name="Copeland A."/>
            <person name="Lucas S."/>
            <person name="Lapidus A."/>
            <person name="Barry K."/>
            <person name="Detter J.C."/>
            <person name="Glavina del Rio T."/>
            <person name="Hammon N."/>
            <person name="Israni S."/>
            <person name="Dalin E."/>
            <person name="Tice H."/>
            <person name="Pitluck S."/>
            <person name="Sims D."/>
            <person name="Brettin T."/>
            <person name="Bruce D."/>
            <person name="Han C."/>
            <person name="Tapia R."/>
            <person name="Schmutz J."/>
            <person name="Larimer F."/>
            <person name="Land M."/>
            <person name="Hauser L."/>
            <person name="Kyrpides N."/>
            <person name="Kim E."/>
            <person name="Tebo B.M."/>
            <person name="Richardson P."/>
        </authorList>
    </citation>
    <scope>NUCLEOTIDE SEQUENCE [LARGE SCALE GENOMIC DNA]</scope>
    <source>
        <strain>ATCC BAA-1160 / DSM 100696 / MI-1</strain>
    </source>
</reference>
<name>RL35_DESRM</name>
<protein>
    <recommendedName>
        <fullName evidence="1">Large ribosomal subunit protein bL35</fullName>
    </recommendedName>
    <alternativeName>
        <fullName evidence="2">50S ribosomal protein L35</fullName>
    </alternativeName>
</protein>
<dbReference type="EMBL" id="CP000612">
    <property type="protein sequence ID" value="ABO50142.1"/>
    <property type="molecule type" value="Genomic_DNA"/>
</dbReference>
<dbReference type="RefSeq" id="WP_011877958.1">
    <property type="nucleotide sequence ID" value="NC_009253.1"/>
</dbReference>
<dbReference type="SMR" id="A4J4Y9"/>
<dbReference type="STRING" id="349161.Dred_1614"/>
<dbReference type="KEGG" id="drm:Dred_1614"/>
<dbReference type="eggNOG" id="COG0291">
    <property type="taxonomic scope" value="Bacteria"/>
</dbReference>
<dbReference type="HOGENOM" id="CLU_169643_4_3_9"/>
<dbReference type="OrthoDB" id="47476at2"/>
<dbReference type="Proteomes" id="UP000001556">
    <property type="component" value="Chromosome"/>
</dbReference>
<dbReference type="GO" id="GO:0022625">
    <property type="term" value="C:cytosolic large ribosomal subunit"/>
    <property type="evidence" value="ECO:0007669"/>
    <property type="project" value="TreeGrafter"/>
</dbReference>
<dbReference type="GO" id="GO:0003735">
    <property type="term" value="F:structural constituent of ribosome"/>
    <property type="evidence" value="ECO:0007669"/>
    <property type="project" value="InterPro"/>
</dbReference>
<dbReference type="GO" id="GO:0006412">
    <property type="term" value="P:translation"/>
    <property type="evidence" value="ECO:0007669"/>
    <property type="project" value="UniProtKB-UniRule"/>
</dbReference>
<dbReference type="FunFam" id="4.10.410.60:FF:000001">
    <property type="entry name" value="50S ribosomal protein L35"/>
    <property type="match status" value="1"/>
</dbReference>
<dbReference type="Gene3D" id="4.10.410.60">
    <property type="match status" value="1"/>
</dbReference>
<dbReference type="HAMAP" id="MF_00514">
    <property type="entry name" value="Ribosomal_bL35"/>
    <property type="match status" value="1"/>
</dbReference>
<dbReference type="InterPro" id="IPR001706">
    <property type="entry name" value="Ribosomal_bL35"/>
</dbReference>
<dbReference type="InterPro" id="IPR021137">
    <property type="entry name" value="Ribosomal_bL35-like"/>
</dbReference>
<dbReference type="InterPro" id="IPR018265">
    <property type="entry name" value="Ribosomal_bL35_CS"/>
</dbReference>
<dbReference type="InterPro" id="IPR037229">
    <property type="entry name" value="Ribosomal_bL35_sf"/>
</dbReference>
<dbReference type="NCBIfam" id="TIGR00001">
    <property type="entry name" value="rpmI_bact"/>
    <property type="match status" value="1"/>
</dbReference>
<dbReference type="PANTHER" id="PTHR33343">
    <property type="entry name" value="54S RIBOSOMAL PROTEIN BL35M"/>
    <property type="match status" value="1"/>
</dbReference>
<dbReference type="PANTHER" id="PTHR33343:SF1">
    <property type="entry name" value="LARGE RIBOSOMAL SUBUNIT PROTEIN BL35M"/>
    <property type="match status" value="1"/>
</dbReference>
<dbReference type="Pfam" id="PF01632">
    <property type="entry name" value="Ribosomal_L35p"/>
    <property type="match status" value="1"/>
</dbReference>
<dbReference type="PRINTS" id="PR00064">
    <property type="entry name" value="RIBOSOMALL35"/>
</dbReference>
<dbReference type="SUPFAM" id="SSF143034">
    <property type="entry name" value="L35p-like"/>
    <property type="match status" value="1"/>
</dbReference>
<dbReference type="PROSITE" id="PS00936">
    <property type="entry name" value="RIBOSOMAL_L35"/>
    <property type="match status" value="1"/>
</dbReference>
<proteinExistence type="inferred from homology"/>
<organism>
    <name type="scientific">Desulforamulus reducens (strain ATCC BAA-1160 / DSM 100696 / MI-1)</name>
    <name type="common">Desulfotomaculum reducens</name>
    <dbReference type="NCBI Taxonomy" id="349161"/>
    <lineage>
        <taxon>Bacteria</taxon>
        <taxon>Bacillati</taxon>
        <taxon>Bacillota</taxon>
        <taxon>Clostridia</taxon>
        <taxon>Eubacteriales</taxon>
        <taxon>Peptococcaceae</taxon>
        <taxon>Desulforamulus</taxon>
    </lineage>
</organism>
<gene>
    <name evidence="1" type="primary">rpmI</name>
    <name type="ordered locus">Dred_1614</name>
</gene>